<organism>
    <name type="scientific">Staphylococcus aureus (strain COL)</name>
    <dbReference type="NCBI Taxonomy" id="93062"/>
    <lineage>
        <taxon>Bacteria</taxon>
        <taxon>Bacillati</taxon>
        <taxon>Bacillota</taxon>
        <taxon>Bacilli</taxon>
        <taxon>Bacillales</taxon>
        <taxon>Staphylococcaceae</taxon>
        <taxon>Staphylococcus</taxon>
    </lineage>
</organism>
<reference key="1">
    <citation type="journal article" date="2005" name="J. Bacteriol.">
        <title>Insights on evolution of virulence and resistance from the complete genome analysis of an early methicillin-resistant Staphylococcus aureus strain and a biofilm-producing methicillin-resistant Staphylococcus epidermidis strain.</title>
        <authorList>
            <person name="Gill S.R."/>
            <person name="Fouts D.E."/>
            <person name="Archer G.L."/>
            <person name="Mongodin E.F."/>
            <person name="DeBoy R.T."/>
            <person name="Ravel J."/>
            <person name="Paulsen I.T."/>
            <person name="Kolonay J.F."/>
            <person name="Brinkac L.M."/>
            <person name="Beanan M.J."/>
            <person name="Dodson R.J."/>
            <person name="Daugherty S.C."/>
            <person name="Madupu R."/>
            <person name="Angiuoli S.V."/>
            <person name="Durkin A.S."/>
            <person name="Haft D.H."/>
            <person name="Vamathevan J.J."/>
            <person name="Khouri H."/>
            <person name="Utterback T.R."/>
            <person name="Lee C."/>
            <person name="Dimitrov G."/>
            <person name="Jiang L."/>
            <person name="Qin H."/>
            <person name="Weidman J."/>
            <person name="Tran K."/>
            <person name="Kang K.H."/>
            <person name="Hance I.R."/>
            <person name="Nelson K.E."/>
            <person name="Fraser C.M."/>
        </authorList>
    </citation>
    <scope>NUCLEOTIDE SEQUENCE [LARGE SCALE GENOMIC DNA]</scope>
    <source>
        <strain>COL</strain>
    </source>
</reference>
<keyword id="KW-1003">Cell membrane</keyword>
<keyword id="KW-0449">Lipoprotein</keyword>
<keyword id="KW-0472">Membrane</keyword>
<keyword id="KW-0564">Palmitate</keyword>
<keyword id="KW-0732">Signal</keyword>
<name>Y2498_STAAC</name>
<feature type="signal peptide" evidence="1">
    <location>
        <begin position="1"/>
        <end position="22"/>
    </location>
</feature>
<feature type="chain" id="PRO_0000282108" description="Uncharacterized lipoprotein SACOL2498">
    <location>
        <begin position="23"/>
        <end position="257"/>
    </location>
</feature>
<feature type="lipid moiety-binding region" description="N-palmitoyl cysteine" evidence="1">
    <location>
        <position position="23"/>
    </location>
</feature>
<feature type="lipid moiety-binding region" description="S-diacylglycerol cysteine" evidence="1">
    <location>
        <position position="23"/>
    </location>
</feature>
<protein>
    <recommendedName>
        <fullName>Uncharacterized lipoprotein SACOL2498</fullName>
    </recommendedName>
</protein>
<evidence type="ECO:0000255" key="1">
    <source>
        <dbReference type="PROSITE-ProRule" id="PRU00303"/>
    </source>
</evidence>
<evidence type="ECO:0000305" key="2"/>
<accession>Q5HD64</accession>
<dbReference type="EMBL" id="CP000046">
    <property type="protein sequence ID" value="AAW37277.1"/>
    <property type="status" value="ALT_INIT"/>
    <property type="molecule type" value="Genomic_DNA"/>
</dbReference>
<dbReference type="SMR" id="Q5HD64"/>
<dbReference type="KEGG" id="sac:SACOL2498"/>
<dbReference type="HOGENOM" id="CLU_071589_0_1_9"/>
<dbReference type="Proteomes" id="UP000000530">
    <property type="component" value="Chromosome"/>
</dbReference>
<dbReference type="GO" id="GO:0005886">
    <property type="term" value="C:plasma membrane"/>
    <property type="evidence" value="ECO:0007669"/>
    <property type="project" value="UniProtKB-SubCell"/>
</dbReference>
<dbReference type="Gene3D" id="2.50.20.40">
    <property type="match status" value="1"/>
</dbReference>
<dbReference type="InterPro" id="IPR007595">
    <property type="entry name" value="Csa"/>
</dbReference>
<dbReference type="InterPro" id="IPR038641">
    <property type="entry name" value="Csa_sf"/>
</dbReference>
<dbReference type="NCBIfam" id="TIGR01742">
    <property type="entry name" value="SA_tandem_lipo"/>
    <property type="match status" value="1"/>
</dbReference>
<dbReference type="Pfam" id="PF04507">
    <property type="entry name" value="DUF576"/>
    <property type="match status" value="1"/>
</dbReference>
<dbReference type="PROSITE" id="PS51257">
    <property type="entry name" value="PROKAR_LIPOPROTEIN"/>
    <property type="match status" value="1"/>
</dbReference>
<proteinExistence type="inferred from homology"/>
<gene>
    <name type="ordered locus">SACOL2498</name>
</gene>
<comment type="subcellular location">
    <subcellularLocation>
        <location evidence="1">Cell membrane</location>
        <topology evidence="1">Lipid-anchor</topology>
    </subcellularLocation>
</comment>
<comment type="similarity">
    <text evidence="2">Belongs to the staphylococcal tandem lipoprotein family.</text>
</comment>
<comment type="sequence caution" evidence="2">
    <conflict type="erroneous initiation">
        <sequence resource="EMBL-CDS" id="AAW37277"/>
    </conflict>
</comment>
<sequence>MIHSKRLRLWLYLVLLAVFIGACGMKKEESSKDKQIKENFNKTLSLYPTKNLEDFYDKEGFRDQEFEKGDKGTWIIHSKMTIETNGKNMESRGLVLYVDRNTRTTKGEFIVRELWEDKKGYSRSKEKEYPVKMEHNKIIPTKPIADDKLRKEIENFKFFVQYGDFKDINDYKDGDISYNPNVPSYSAKYQLSNDDYNVKQLRKRYDIPTKKAPKLLIKGDGDLKGSSIGHKNLEFTFIENKEENIYFTDSINFKPTE</sequence>